<dbReference type="EMBL" id="CP000248">
    <property type="protein sequence ID" value="ABD26682.1"/>
    <property type="molecule type" value="Genomic_DNA"/>
</dbReference>
<dbReference type="RefSeq" id="WP_011445888.1">
    <property type="nucleotide sequence ID" value="NC_007794.1"/>
</dbReference>
<dbReference type="SMR" id="Q2G641"/>
<dbReference type="STRING" id="279238.Saro_2245"/>
<dbReference type="KEGG" id="nar:Saro_2245"/>
<dbReference type="eggNOG" id="COG0522">
    <property type="taxonomic scope" value="Bacteria"/>
</dbReference>
<dbReference type="HOGENOM" id="CLU_092403_0_0_5"/>
<dbReference type="Proteomes" id="UP000009134">
    <property type="component" value="Chromosome"/>
</dbReference>
<dbReference type="GO" id="GO:0015935">
    <property type="term" value="C:small ribosomal subunit"/>
    <property type="evidence" value="ECO:0007669"/>
    <property type="project" value="InterPro"/>
</dbReference>
<dbReference type="GO" id="GO:0019843">
    <property type="term" value="F:rRNA binding"/>
    <property type="evidence" value="ECO:0007669"/>
    <property type="project" value="UniProtKB-UniRule"/>
</dbReference>
<dbReference type="GO" id="GO:0003735">
    <property type="term" value="F:structural constituent of ribosome"/>
    <property type="evidence" value="ECO:0007669"/>
    <property type="project" value="InterPro"/>
</dbReference>
<dbReference type="GO" id="GO:0042274">
    <property type="term" value="P:ribosomal small subunit biogenesis"/>
    <property type="evidence" value="ECO:0007669"/>
    <property type="project" value="TreeGrafter"/>
</dbReference>
<dbReference type="GO" id="GO:0006412">
    <property type="term" value="P:translation"/>
    <property type="evidence" value="ECO:0007669"/>
    <property type="project" value="UniProtKB-UniRule"/>
</dbReference>
<dbReference type="CDD" id="cd00165">
    <property type="entry name" value="S4"/>
    <property type="match status" value="1"/>
</dbReference>
<dbReference type="FunFam" id="3.10.290.10:FF:000001">
    <property type="entry name" value="30S ribosomal protein S4"/>
    <property type="match status" value="1"/>
</dbReference>
<dbReference type="Gene3D" id="1.10.1050.10">
    <property type="entry name" value="Ribosomal Protein S4 Delta 41, Chain A, domain 1"/>
    <property type="match status" value="1"/>
</dbReference>
<dbReference type="Gene3D" id="3.10.290.10">
    <property type="entry name" value="RNA-binding S4 domain"/>
    <property type="match status" value="1"/>
</dbReference>
<dbReference type="HAMAP" id="MF_01306_B">
    <property type="entry name" value="Ribosomal_uS4_B"/>
    <property type="match status" value="1"/>
</dbReference>
<dbReference type="InterPro" id="IPR022801">
    <property type="entry name" value="Ribosomal_uS4"/>
</dbReference>
<dbReference type="InterPro" id="IPR005709">
    <property type="entry name" value="Ribosomal_uS4_bac-type"/>
</dbReference>
<dbReference type="InterPro" id="IPR018079">
    <property type="entry name" value="Ribosomal_uS4_CS"/>
</dbReference>
<dbReference type="InterPro" id="IPR001912">
    <property type="entry name" value="Ribosomal_uS4_N"/>
</dbReference>
<dbReference type="InterPro" id="IPR002942">
    <property type="entry name" value="S4_RNA-bd"/>
</dbReference>
<dbReference type="InterPro" id="IPR036986">
    <property type="entry name" value="S4_RNA-bd_sf"/>
</dbReference>
<dbReference type="NCBIfam" id="NF003717">
    <property type="entry name" value="PRK05327.1"/>
    <property type="match status" value="1"/>
</dbReference>
<dbReference type="NCBIfam" id="TIGR01017">
    <property type="entry name" value="rpsD_bact"/>
    <property type="match status" value="1"/>
</dbReference>
<dbReference type="PANTHER" id="PTHR11831">
    <property type="entry name" value="30S 40S RIBOSOMAL PROTEIN"/>
    <property type="match status" value="1"/>
</dbReference>
<dbReference type="PANTHER" id="PTHR11831:SF4">
    <property type="entry name" value="SMALL RIBOSOMAL SUBUNIT PROTEIN US4M"/>
    <property type="match status" value="1"/>
</dbReference>
<dbReference type="Pfam" id="PF00163">
    <property type="entry name" value="Ribosomal_S4"/>
    <property type="match status" value="1"/>
</dbReference>
<dbReference type="Pfam" id="PF01479">
    <property type="entry name" value="S4"/>
    <property type="match status" value="1"/>
</dbReference>
<dbReference type="SMART" id="SM01390">
    <property type="entry name" value="Ribosomal_S4"/>
    <property type="match status" value="1"/>
</dbReference>
<dbReference type="SMART" id="SM00363">
    <property type="entry name" value="S4"/>
    <property type="match status" value="1"/>
</dbReference>
<dbReference type="SUPFAM" id="SSF55174">
    <property type="entry name" value="Alpha-L RNA-binding motif"/>
    <property type="match status" value="1"/>
</dbReference>
<dbReference type="PROSITE" id="PS00632">
    <property type="entry name" value="RIBOSOMAL_S4"/>
    <property type="match status" value="1"/>
</dbReference>
<dbReference type="PROSITE" id="PS50889">
    <property type="entry name" value="S4"/>
    <property type="match status" value="1"/>
</dbReference>
<gene>
    <name evidence="1" type="primary">rpsD</name>
    <name type="ordered locus">Saro_2245</name>
</gene>
<evidence type="ECO:0000255" key="1">
    <source>
        <dbReference type="HAMAP-Rule" id="MF_01306"/>
    </source>
</evidence>
<evidence type="ECO:0000256" key="2">
    <source>
        <dbReference type="SAM" id="MobiDB-lite"/>
    </source>
</evidence>
<evidence type="ECO:0000305" key="3"/>
<protein>
    <recommendedName>
        <fullName evidence="1">Small ribosomal subunit protein uS4</fullName>
    </recommendedName>
    <alternativeName>
        <fullName evidence="3">30S ribosomal protein S4</fullName>
    </alternativeName>
</protein>
<sequence>MSKRKASKYKIDRRLGENIWGRPKSSVNRRSYGPGQHGQRRKSKVSDFGIQLRAKQKLKGYYGDVTEKQFKRTYQEASKMKGDTGQNLIGLLEQRLDMVVYRAKFAPTIFSARQVVSHGHIYVNGVKCNIASRRVRPGDVVSLGKKAKEMALIAEAQALPEREVPDYVAADGDKVTFTRVPTLDEVPYPVKMEPNLVVEFYSR</sequence>
<comment type="function">
    <text evidence="1">One of the primary rRNA binding proteins, it binds directly to 16S rRNA where it nucleates assembly of the body of the 30S subunit.</text>
</comment>
<comment type="function">
    <text evidence="1">With S5 and S12 plays an important role in translational accuracy.</text>
</comment>
<comment type="subunit">
    <text evidence="1">Part of the 30S ribosomal subunit. Contacts protein S5. The interaction surface between S4 and S5 is involved in control of translational fidelity.</text>
</comment>
<comment type="similarity">
    <text evidence="1">Belongs to the universal ribosomal protein uS4 family.</text>
</comment>
<accession>Q2G641</accession>
<keyword id="KW-1185">Reference proteome</keyword>
<keyword id="KW-0687">Ribonucleoprotein</keyword>
<keyword id="KW-0689">Ribosomal protein</keyword>
<keyword id="KW-0694">RNA-binding</keyword>
<keyword id="KW-0699">rRNA-binding</keyword>
<proteinExistence type="inferred from homology"/>
<name>RS4_NOVAD</name>
<feature type="chain" id="PRO_0000293328" description="Small ribosomal subunit protein uS4">
    <location>
        <begin position="1"/>
        <end position="203"/>
    </location>
</feature>
<feature type="domain" description="S4 RNA-binding" evidence="1">
    <location>
        <begin position="94"/>
        <end position="154"/>
    </location>
</feature>
<feature type="region of interest" description="Disordered" evidence="2">
    <location>
        <begin position="15"/>
        <end position="46"/>
    </location>
</feature>
<organism>
    <name type="scientific">Novosphingobium aromaticivorans (strain ATCC 700278 / DSM 12444 / CCUG 56034 / CIP 105152 / NBRC 16084 / F199)</name>
    <dbReference type="NCBI Taxonomy" id="279238"/>
    <lineage>
        <taxon>Bacteria</taxon>
        <taxon>Pseudomonadati</taxon>
        <taxon>Pseudomonadota</taxon>
        <taxon>Alphaproteobacteria</taxon>
        <taxon>Sphingomonadales</taxon>
        <taxon>Sphingomonadaceae</taxon>
        <taxon>Novosphingobium</taxon>
    </lineage>
</organism>
<reference key="1">
    <citation type="submission" date="2006-01" db="EMBL/GenBank/DDBJ databases">
        <title>Complete sequence of Novosphingobium aromaticivorans DSM 12444.</title>
        <authorList>
            <consortium name="US DOE Joint Genome Institute"/>
            <person name="Copeland A."/>
            <person name="Lucas S."/>
            <person name="Lapidus A."/>
            <person name="Barry K."/>
            <person name="Detter J.C."/>
            <person name="Glavina T."/>
            <person name="Hammon N."/>
            <person name="Israni S."/>
            <person name="Pitluck S."/>
            <person name="Chain P."/>
            <person name="Malfatti S."/>
            <person name="Shin M."/>
            <person name="Vergez L."/>
            <person name="Schmutz J."/>
            <person name="Larimer F."/>
            <person name="Land M."/>
            <person name="Kyrpides N."/>
            <person name="Ivanova N."/>
            <person name="Fredrickson J."/>
            <person name="Balkwill D."/>
            <person name="Romine M.F."/>
            <person name="Richardson P."/>
        </authorList>
    </citation>
    <scope>NUCLEOTIDE SEQUENCE [LARGE SCALE GENOMIC DNA]</scope>
    <source>
        <strain>ATCC 700278 / DSM 12444 / CCUG 56034 / CIP 105152 / NBRC 16084 / F199</strain>
    </source>
</reference>